<comment type="function">
    <text evidence="1">The RuvA-RuvB-RuvC complex processes Holliday junction (HJ) DNA during genetic recombination and DNA repair. Endonuclease that resolves HJ intermediates. Cleaves cruciform DNA by making single-stranded nicks across the HJ at symmetrical positions within the homologous arms, yielding a 5'-phosphate and a 3'-hydroxyl group; requires a central core of homology in the junction. The consensus cleavage sequence is 5'-(A/T)TT(C/G)-3'. Cleavage occurs on the 3'-side of the TT dinucleotide at the point of strand exchange. HJ branch migration catalyzed by RuvA-RuvB allows RuvC to scan DNA until it finds its consensus sequence, where it cleaves and resolves the cruciform DNA.</text>
</comment>
<comment type="catalytic activity">
    <reaction evidence="1">
        <text>Endonucleolytic cleavage at a junction such as a reciprocal single-stranded crossover between two homologous DNA duplexes (Holliday junction).</text>
        <dbReference type="EC" id="3.1.21.10"/>
    </reaction>
</comment>
<comment type="cofactor">
    <cofactor evidence="1">
        <name>Mg(2+)</name>
        <dbReference type="ChEBI" id="CHEBI:18420"/>
    </cofactor>
    <text evidence="1">Binds 2 Mg(2+) ion per subunit.</text>
</comment>
<comment type="subunit">
    <text evidence="1">Homodimer which binds Holliday junction (HJ) DNA. The HJ becomes 2-fold symmetrical on binding to RuvC with unstacked arms; it has a different conformation from HJ DNA in complex with RuvA. In the full resolvosome a probable DNA-RuvA(4)-RuvB(12)-RuvC(2) complex forms which resolves the HJ.</text>
</comment>
<comment type="subcellular location">
    <subcellularLocation>
        <location evidence="1">Cytoplasm</location>
    </subcellularLocation>
</comment>
<comment type="similarity">
    <text evidence="1">Belongs to the RuvC family.</text>
</comment>
<proteinExistence type="inferred from homology"/>
<dbReference type="EC" id="3.1.21.10" evidence="1"/>
<dbReference type="EMBL" id="AP009240">
    <property type="protein sequence ID" value="BAG77563.1"/>
    <property type="molecule type" value="Genomic_DNA"/>
</dbReference>
<dbReference type="RefSeq" id="WP_001295503.1">
    <property type="nucleotide sequence ID" value="NC_011415.1"/>
</dbReference>
<dbReference type="SMR" id="B6IBU2"/>
<dbReference type="GeneID" id="89516631"/>
<dbReference type="KEGG" id="ecy:ECSE_2039"/>
<dbReference type="HOGENOM" id="CLU_091257_2_1_6"/>
<dbReference type="Proteomes" id="UP000008199">
    <property type="component" value="Chromosome"/>
</dbReference>
<dbReference type="GO" id="GO:0005737">
    <property type="term" value="C:cytoplasm"/>
    <property type="evidence" value="ECO:0007669"/>
    <property type="project" value="UniProtKB-SubCell"/>
</dbReference>
<dbReference type="GO" id="GO:0048476">
    <property type="term" value="C:Holliday junction resolvase complex"/>
    <property type="evidence" value="ECO:0007669"/>
    <property type="project" value="UniProtKB-UniRule"/>
</dbReference>
<dbReference type="GO" id="GO:0008821">
    <property type="term" value="F:crossover junction DNA endonuclease activity"/>
    <property type="evidence" value="ECO:0007669"/>
    <property type="project" value="UniProtKB-UniRule"/>
</dbReference>
<dbReference type="GO" id="GO:0003677">
    <property type="term" value="F:DNA binding"/>
    <property type="evidence" value="ECO:0007669"/>
    <property type="project" value="UniProtKB-KW"/>
</dbReference>
<dbReference type="GO" id="GO:0000287">
    <property type="term" value="F:magnesium ion binding"/>
    <property type="evidence" value="ECO:0007669"/>
    <property type="project" value="UniProtKB-UniRule"/>
</dbReference>
<dbReference type="GO" id="GO:0006310">
    <property type="term" value="P:DNA recombination"/>
    <property type="evidence" value="ECO:0007669"/>
    <property type="project" value="UniProtKB-UniRule"/>
</dbReference>
<dbReference type="GO" id="GO:0006281">
    <property type="term" value="P:DNA repair"/>
    <property type="evidence" value="ECO:0007669"/>
    <property type="project" value="UniProtKB-UniRule"/>
</dbReference>
<dbReference type="CDD" id="cd16962">
    <property type="entry name" value="RuvC"/>
    <property type="match status" value="1"/>
</dbReference>
<dbReference type="FunFam" id="3.30.420.10:FF:000002">
    <property type="entry name" value="Crossover junction endodeoxyribonuclease RuvC"/>
    <property type="match status" value="1"/>
</dbReference>
<dbReference type="Gene3D" id="3.30.420.10">
    <property type="entry name" value="Ribonuclease H-like superfamily/Ribonuclease H"/>
    <property type="match status" value="1"/>
</dbReference>
<dbReference type="HAMAP" id="MF_00034">
    <property type="entry name" value="RuvC"/>
    <property type="match status" value="1"/>
</dbReference>
<dbReference type="InterPro" id="IPR012337">
    <property type="entry name" value="RNaseH-like_sf"/>
</dbReference>
<dbReference type="InterPro" id="IPR036397">
    <property type="entry name" value="RNaseH_sf"/>
</dbReference>
<dbReference type="InterPro" id="IPR020563">
    <property type="entry name" value="X-over_junc_endoDNase_Mg_BS"/>
</dbReference>
<dbReference type="InterPro" id="IPR002176">
    <property type="entry name" value="X-over_junc_endoDNase_RuvC"/>
</dbReference>
<dbReference type="NCBIfam" id="NF000711">
    <property type="entry name" value="PRK00039.2-1"/>
    <property type="match status" value="1"/>
</dbReference>
<dbReference type="NCBIfam" id="TIGR00228">
    <property type="entry name" value="ruvC"/>
    <property type="match status" value="1"/>
</dbReference>
<dbReference type="PANTHER" id="PTHR30194">
    <property type="entry name" value="CROSSOVER JUNCTION ENDODEOXYRIBONUCLEASE RUVC"/>
    <property type="match status" value="1"/>
</dbReference>
<dbReference type="PANTHER" id="PTHR30194:SF3">
    <property type="entry name" value="CROSSOVER JUNCTION ENDODEOXYRIBONUCLEASE RUVC"/>
    <property type="match status" value="1"/>
</dbReference>
<dbReference type="Pfam" id="PF02075">
    <property type="entry name" value="RuvC"/>
    <property type="match status" value="1"/>
</dbReference>
<dbReference type="PRINTS" id="PR00696">
    <property type="entry name" value="RSOLVASERUVC"/>
</dbReference>
<dbReference type="SUPFAM" id="SSF53098">
    <property type="entry name" value="Ribonuclease H-like"/>
    <property type="match status" value="1"/>
</dbReference>
<dbReference type="PROSITE" id="PS01321">
    <property type="entry name" value="RUVC"/>
    <property type="match status" value="1"/>
</dbReference>
<accession>B6IBU2</accession>
<sequence>MAIILGIDPGSRVTGYGVIRQVGRQLSYLGSGCIRTKVDDLPSRLKLIYAGVTEIITQFQPDYFAIEQVFMAKNADSALKLGQARGVAIVAAVNQELPVFEYAARQVKQTVVGIGSAEKSQVQHMVRTLLKLPANPQADAADALAIAITHCHVSQNAMQMSESRLNLARGRLR</sequence>
<protein>
    <recommendedName>
        <fullName evidence="1">Crossover junction endodeoxyribonuclease RuvC</fullName>
        <ecNumber evidence="1">3.1.21.10</ecNumber>
    </recommendedName>
    <alternativeName>
        <fullName evidence="1">Holliday junction nuclease RuvC</fullName>
    </alternativeName>
    <alternativeName>
        <fullName evidence="1">Holliday junction resolvase RuvC</fullName>
    </alternativeName>
</protein>
<organism>
    <name type="scientific">Escherichia coli (strain SE11)</name>
    <dbReference type="NCBI Taxonomy" id="409438"/>
    <lineage>
        <taxon>Bacteria</taxon>
        <taxon>Pseudomonadati</taxon>
        <taxon>Pseudomonadota</taxon>
        <taxon>Gammaproteobacteria</taxon>
        <taxon>Enterobacterales</taxon>
        <taxon>Enterobacteriaceae</taxon>
        <taxon>Escherichia</taxon>
    </lineage>
</organism>
<gene>
    <name evidence="1" type="primary">ruvC</name>
    <name type="ordered locus">ECSE_2039</name>
</gene>
<reference key="1">
    <citation type="journal article" date="2008" name="DNA Res.">
        <title>Complete genome sequence and comparative analysis of the wild-type commensal Escherichia coli strain SE11 isolated from a healthy adult.</title>
        <authorList>
            <person name="Oshima K."/>
            <person name="Toh H."/>
            <person name="Ogura Y."/>
            <person name="Sasamoto H."/>
            <person name="Morita H."/>
            <person name="Park S.-H."/>
            <person name="Ooka T."/>
            <person name="Iyoda S."/>
            <person name="Taylor T.D."/>
            <person name="Hayashi T."/>
            <person name="Itoh K."/>
            <person name="Hattori M."/>
        </authorList>
    </citation>
    <scope>NUCLEOTIDE SEQUENCE [LARGE SCALE GENOMIC DNA]</scope>
    <source>
        <strain>SE11</strain>
    </source>
</reference>
<keyword id="KW-0963">Cytoplasm</keyword>
<keyword id="KW-0227">DNA damage</keyword>
<keyword id="KW-0233">DNA recombination</keyword>
<keyword id="KW-0234">DNA repair</keyword>
<keyword id="KW-0238">DNA-binding</keyword>
<keyword id="KW-0255">Endonuclease</keyword>
<keyword id="KW-0378">Hydrolase</keyword>
<keyword id="KW-0460">Magnesium</keyword>
<keyword id="KW-0479">Metal-binding</keyword>
<keyword id="KW-0540">Nuclease</keyword>
<evidence type="ECO:0000255" key="1">
    <source>
        <dbReference type="HAMAP-Rule" id="MF_00034"/>
    </source>
</evidence>
<name>RUVC_ECOSE</name>
<feature type="chain" id="PRO_1000090524" description="Crossover junction endodeoxyribonuclease RuvC">
    <location>
        <begin position="1"/>
        <end position="173"/>
    </location>
</feature>
<feature type="active site" evidence="1">
    <location>
        <position position="8"/>
    </location>
</feature>
<feature type="active site" evidence="1">
    <location>
        <position position="67"/>
    </location>
</feature>
<feature type="active site" evidence="1">
    <location>
        <position position="139"/>
    </location>
</feature>
<feature type="binding site" evidence="1">
    <location>
        <position position="8"/>
    </location>
    <ligand>
        <name>Mg(2+)</name>
        <dbReference type="ChEBI" id="CHEBI:18420"/>
        <label>1</label>
    </ligand>
</feature>
<feature type="binding site" evidence="1">
    <location>
        <position position="67"/>
    </location>
    <ligand>
        <name>Mg(2+)</name>
        <dbReference type="ChEBI" id="CHEBI:18420"/>
        <label>2</label>
    </ligand>
</feature>
<feature type="binding site" evidence="1">
    <location>
        <position position="139"/>
    </location>
    <ligand>
        <name>Mg(2+)</name>
        <dbReference type="ChEBI" id="CHEBI:18420"/>
        <label>1</label>
    </ligand>
</feature>